<sequence length="59" mass="6389">MAVPKKKTSKGKRNQRHATWKGKAAVAAEKALSIGKSVLTGRAQGFVYPMNETSEEEAD</sequence>
<organism>
    <name type="scientific">Prochlorococcus marinus (strain NATL1A)</name>
    <dbReference type="NCBI Taxonomy" id="167555"/>
    <lineage>
        <taxon>Bacteria</taxon>
        <taxon>Bacillati</taxon>
        <taxon>Cyanobacteriota</taxon>
        <taxon>Cyanophyceae</taxon>
        <taxon>Synechococcales</taxon>
        <taxon>Prochlorococcaceae</taxon>
        <taxon>Prochlorococcus</taxon>
    </lineage>
</organism>
<comment type="similarity">
    <text evidence="1">Belongs to the bacterial ribosomal protein bL32 family.</text>
</comment>
<accession>A2C283</accession>
<feature type="chain" id="PRO_0000296531" description="Large ribosomal subunit protein bL32">
    <location>
        <begin position="1"/>
        <end position="59"/>
    </location>
</feature>
<feature type="region of interest" description="Disordered" evidence="2">
    <location>
        <begin position="1"/>
        <end position="22"/>
    </location>
</feature>
<feature type="compositionally biased region" description="Basic residues" evidence="2">
    <location>
        <begin position="1"/>
        <end position="20"/>
    </location>
</feature>
<protein>
    <recommendedName>
        <fullName evidence="1">Large ribosomal subunit protein bL32</fullName>
    </recommendedName>
    <alternativeName>
        <fullName evidence="3">50S ribosomal protein L32</fullName>
    </alternativeName>
</protein>
<evidence type="ECO:0000255" key="1">
    <source>
        <dbReference type="HAMAP-Rule" id="MF_00340"/>
    </source>
</evidence>
<evidence type="ECO:0000256" key="2">
    <source>
        <dbReference type="SAM" id="MobiDB-lite"/>
    </source>
</evidence>
<evidence type="ECO:0000305" key="3"/>
<name>RL32_PROM1</name>
<keyword id="KW-0687">Ribonucleoprotein</keyword>
<keyword id="KW-0689">Ribosomal protein</keyword>
<proteinExistence type="inferred from homology"/>
<reference key="1">
    <citation type="journal article" date="2007" name="PLoS Genet.">
        <title>Patterns and implications of gene gain and loss in the evolution of Prochlorococcus.</title>
        <authorList>
            <person name="Kettler G.C."/>
            <person name="Martiny A.C."/>
            <person name="Huang K."/>
            <person name="Zucker J."/>
            <person name="Coleman M.L."/>
            <person name="Rodrigue S."/>
            <person name="Chen F."/>
            <person name="Lapidus A."/>
            <person name="Ferriera S."/>
            <person name="Johnson J."/>
            <person name="Steglich C."/>
            <person name="Church G.M."/>
            <person name="Richardson P."/>
            <person name="Chisholm S.W."/>
        </authorList>
    </citation>
    <scope>NUCLEOTIDE SEQUENCE [LARGE SCALE GENOMIC DNA]</scope>
    <source>
        <strain>NATL1A</strain>
    </source>
</reference>
<gene>
    <name evidence="1" type="primary">rpmF</name>
    <name evidence="1" type="synonym">rpl32</name>
    <name type="ordered locus">NATL1_10351</name>
</gene>
<dbReference type="EMBL" id="CP000553">
    <property type="protein sequence ID" value="ABM75593.1"/>
    <property type="molecule type" value="Genomic_DNA"/>
</dbReference>
<dbReference type="RefSeq" id="WP_011293888.1">
    <property type="nucleotide sequence ID" value="NC_008819.1"/>
</dbReference>
<dbReference type="SMR" id="A2C283"/>
<dbReference type="KEGG" id="pme:NATL1_10351"/>
<dbReference type="eggNOG" id="COG0333">
    <property type="taxonomic scope" value="Bacteria"/>
</dbReference>
<dbReference type="HOGENOM" id="CLU_199882_0_0_3"/>
<dbReference type="Proteomes" id="UP000002592">
    <property type="component" value="Chromosome"/>
</dbReference>
<dbReference type="GO" id="GO:0015934">
    <property type="term" value="C:large ribosomal subunit"/>
    <property type="evidence" value="ECO:0007669"/>
    <property type="project" value="InterPro"/>
</dbReference>
<dbReference type="GO" id="GO:0003735">
    <property type="term" value="F:structural constituent of ribosome"/>
    <property type="evidence" value="ECO:0007669"/>
    <property type="project" value="InterPro"/>
</dbReference>
<dbReference type="GO" id="GO:0006412">
    <property type="term" value="P:translation"/>
    <property type="evidence" value="ECO:0007669"/>
    <property type="project" value="UniProtKB-UniRule"/>
</dbReference>
<dbReference type="Gene3D" id="1.20.5.640">
    <property type="entry name" value="Single helix bin"/>
    <property type="match status" value="1"/>
</dbReference>
<dbReference type="HAMAP" id="MF_00340">
    <property type="entry name" value="Ribosomal_bL32"/>
    <property type="match status" value="1"/>
</dbReference>
<dbReference type="InterPro" id="IPR002677">
    <property type="entry name" value="Ribosomal_bL32"/>
</dbReference>
<dbReference type="InterPro" id="IPR044958">
    <property type="entry name" value="Ribosomal_bL32_plant/cyanobact"/>
</dbReference>
<dbReference type="InterPro" id="IPR011332">
    <property type="entry name" value="Ribosomal_zn-bd"/>
</dbReference>
<dbReference type="NCBIfam" id="TIGR01031">
    <property type="entry name" value="rpmF_bact"/>
    <property type="match status" value="1"/>
</dbReference>
<dbReference type="PANTHER" id="PTHR36083">
    <property type="entry name" value="50S RIBOSOMAL PROTEIN L32, CHLOROPLASTIC"/>
    <property type="match status" value="1"/>
</dbReference>
<dbReference type="PANTHER" id="PTHR36083:SF1">
    <property type="entry name" value="LARGE RIBOSOMAL SUBUNIT PROTEIN BL32C"/>
    <property type="match status" value="1"/>
</dbReference>
<dbReference type="Pfam" id="PF01783">
    <property type="entry name" value="Ribosomal_L32p"/>
    <property type="match status" value="1"/>
</dbReference>
<dbReference type="SUPFAM" id="SSF57829">
    <property type="entry name" value="Zn-binding ribosomal proteins"/>
    <property type="match status" value="1"/>
</dbReference>